<accession>O28374</accession>
<evidence type="ECO:0000255" key="1">
    <source>
        <dbReference type="HAMAP-Rule" id="MF_01307"/>
    </source>
</evidence>
<evidence type="ECO:0000305" key="2"/>
<protein>
    <recommendedName>
        <fullName evidence="1">Small ribosomal subunit protein uS5</fullName>
    </recommendedName>
    <alternativeName>
        <fullName evidence="2">30S ribosomal protein S5</fullName>
    </alternativeName>
</protein>
<proteinExistence type="inferred from homology"/>
<comment type="function">
    <text evidence="1">With S4 and S12 plays an important role in translational accuracy.</text>
</comment>
<comment type="subunit">
    <text evidence="1">Part of the 30S ribosomal subunit. Contacts protein S4.</text>
</comment>
<comment type="domain">
    <text>The N-terminal domain interacts with the head of the 30S subunit; the C-terminal domain interacts with the body and contacts protein S4. The interaction surface between S4 and S5 is involved in control of translational fidelity.</text>
</comment>
<comment type="similarity">
    <text evidence="1">Belongs to the universal ribosomal protein uS5 family.</text>
</comment>
<sequence length="198" mass="21364">MTEDWVPKTKLGRLVADGKIKTMDEALASNLPLKEPEIVDILLPDLEDDVLEISMVQRMTDSGRRTKFRVTAVVGNRNGYVGIGTGKASQVAPAIQKAINNAKLNIFKVQRGCGSWECGCGGDHSLPFKVTGTSGSVRVTLIPGPKGLGIVAGDVAKRVIELAGVKDVWSFTKGQTKTTVNFAKATYEALKKTMYVKR</sequence>
<dbReference type="EMBL" id="AE000782">
    <property type="protein sequence ID" value="AAB89344.1"/>
    <property type="molecule type" value="Genomic_DNA"/>
</dbReference>
<dbReference type="PIR" id="H69487">
    <property type="entry name" value="H69487"/>
</dbReference>
<dbReference type="SMR" id="O28374"/>
<dbReference type="STRING" id="224325.AF_1905"/>
<dbReference type="PaxDb" id="224325-AF_1905"/>
<dbReference type="EnsemblBacteria" id="AAB89344">
    <property type="protein sequence ID" value="AAB89344"/>
    <property type="gene ID" value="AF_1905"/>
</dbReference>
<dbReference type="KEGG" id="afu:AF_1905"/>
<dbReference type="eggNOG" id="arCOG04087">
    <property type="taxonomic scope" value="Archaea"/>
</dbReference>
<dbReference type="HOGENOM" id="CLU_065898_0_1_2"/>
<dbReference type="OrthoDB" id="38155at2157"/>
<dbReference type="PhylomeDB" id="O28374"/>
<dbReference type="Proteomes" id="UP000002199">
    <property type="component" value="Chromosome"/>
</dbReference>
<dbReference type="GO" id="GO:0022627">
    <property type="term" value="C:cytosolic small ribosomal subunit"/>
    <property type="evidence" value="ECO:0007669"/>
    <property type="project" value="TreeGrafter"/>
</dbReference>
<dbReference type="GO" id="GO:0019843">
    <property type="term" value="F:rRNA binding"/>
    <property type="evidence" value="ECO:0007669"/>
    <property type="project" value="UniProtKB-UniRule"/>
</dbReference>
<dbReference type="GO" id="GO:0003735">
    <property type="term" value="F:structural constituent of ribosome"/>
    <property type="evidence" value="ECO:0007669"/>
    <property type="project" value="InterPro"/>
</dbReference>
<dbReference type="GO" id="GO:0006412">
    <property type="term" value="P:translation"/>
    <property type="evidence" value="ECO:0007669"/>
    <property type="project" value="UniProtKB-UniRule"/>
</dbReference>
<dbReference type="FunFam" id="3.30.160.20:FF:000002">
    <property type="entry name" value="40S ribosomal protein S2"/>
    <property type="match status" value="1"/>
</dbReference>
<dbReference type="FunFam" id="3.30.230.10:FF:000004">
    <property type="entry name" value="40S ribosomal protein S2"/>
    <property type="match status" value="1"/>
</dbReference>
<dbReference type="Gene3D" id="3.30.160.20">
    <property type="match status" value="1"/>
</dbReference>
<dbReference type="Gene3D" id="3.30.230.10">
    <property type="match status" value="1"/>
</dbReference>
<dbReference type="HAMAP" id="MF_01307_A">
    <property type="entry name" value="Ribosomal_uS5_A"/>
    <property type="match status" value="1"/>
</dbReference>
<dbReference type="InterPro" id="IPR020568">
    <property type="entry name" value="Ribosomal_Su5_D2-typ_SF"/>
</dbReference>
<dbReference type="InterPro" id="IPR000851">
    <property type="entry name" value="Ribosomal_uS5"/>
</dbReference>
<dbReference type="InterPro" id="IPR047866">
    <property type="entry name" value="Ribosomal_uS5_arc"/>
</dbReference>
<dbReference type="InterPro" id="IPR005324">
    <property type="entry name" value="Ribosomal_uS5_C"/>
</dbReference>
<dbReference type="InterPro" id="IPR005711">
    <property type="entry name" value="Ribosomal_uS5_euk/arc"/>
</dbReference>
<dbReference type="InterPro" id="IPR013810">
    <property type="entry name" value="Ribosomal_uS5_N"/>
</dbReference>
<dbReference type="InterPro" id="IPR018192">
    <property type="entry name" value="Ribosomal_uS5_N_CS"/>
</dbReference>
<dbReference type="InterPro" id="IPR014721">
    <property type="entry name" value="Ribsml_uS5_D2-typ_fold_subgr"/>
</dbReference>
<dbReference type="NCBIfam" id="NF003125">
    <property type="entry name" value="PRK04044.1"/>
    <property type="match status" value="1"/>
</dbReference>
<dbReference type="NCBIfam" id="TIGR01020">
    <property type="entry name" value="uS5_euk_arch"/>
    <property type="match status" value="1"/>
</dbReference>
<dbReference type="PANTHER" id="PTHR13718:SF4">
    <property type="entry name" value="40S RIBOSOMAL PROTEIN S2"/>
    <property type="match status" value="1"/>
</dbReference>
<dbReference type="PANTHER" id="PTHR13718">
    <property type="entry name" value="RIBOSOMAL S SUBUNIT"/>
    <property type="match status" value="1"/>
</dbReference>
<dbReference type="Pfam" id="PF00333">
    <property type="entry name" value="Ribosomal_S5"/>
    <property type="match status" value="1"/>
</dbReference>
<dbReference type="Pfam" id="PF03719">
    <property type="entry name" value="Ribosomal_S5_C"/>
    <property type="match status" value="1"/>
</dbReference>
<dbReference type="SUPFAM" id="SSF54768">
    <property type="entry name" value="dsRNA-binding domain-like"/>
    <property type="match status" value="1"/>
</dbReference>
<dbReference type="SUPFAM" id="SSF54211">
    <property type="entry name" value="Ribosomal protein S5 domain 2-like"/>
    <property type="match status" value="1"/>
</dbReference>
<dbReference type="PROSITE" id="PS00585">
    <property type="entry name" value="RIBOSOMAL_S5"/>
    <property type="match status" value="1"/>
</dbReference>
<dbReference type="PROSITE" id="PS50881">
    <property type="entry name" value="S5_DSRBD"/>
    <property type="match status" value="1"/>
</dbReference>
<gene>
    <name evidence="1" type="primary">rps5</name>
    <name type="ordered locus">AF_1905</name>
</gene>
<reference key="1">
    <citation type="journal article" date="1997" name="Nature">
        <title>The complete genome sequence of the hyperthermophilic, sulphate-reducing archaeon Archaeoglobus fulgidus.</title>
        <authorList>
            <person name="Klenk H.-P."/>
            <person name="Clayton R.A."/>
            <person name="Tomb J.-F."/>
            <person name="White O."/>
            <person name="Nelson K.E."/>
            <person name="Ketchum K.A."/>
            <person name="Dodson R.J."/>
            <person name="Gwinn M.L."/>
            <person name="Hickey E.K."/>
            <person name="Peterson J.D."/>
            <person name="Richardson D.L."/>
            <person name="Kerlavage A.R."/>
            <person name="Graham D.E."/>
            <person name="Kyrpides N.C."/>
            <person name="Fleischmann R.D."/>
            <person name="Quackenbush J."/>
            <person name="Lee N.H."/>
            <person name="Sutton G.G."/>
            <person name="Gill S.R."/>
            <person name="Kirkness E.F."/>
            <person name="Dougherty B.A."/>
            <person name="McKenney K."/>
            <person name="Adams M.D."/>
            <person name="Loftus B.J."/>
            <person name="Peterson S.N."/>
            <person name="Reich C.I."/>
            <person name="McNeil L.K."/>
            <person name="Badger J.H."/>
            <person name="Glodek A."/>
            <person name="Zhou L."/>
            <person name="Overbeek R."/>
            <person name="Gocayne J.D."/>
            <person name="Weidman J.F."/>
            <person name="McDonald L.A."/>
            <person name="Utterback T.R."/>
            <person name="Cotton M.D."/>
            <person name="Spriggs T."/>
            <person name="Artiach P."/>
            <person name="Kaine B.P."/>
            <person name="Sykes S.M."/>
            <person name="Sadow P.W."/>
            <person name="D'Andrea K.P."/>
            <person name="Bowman C."/>
            <person name="Fujii C."/>
            <person name="Garland S.A."/>
            <person name="Mason T.M."/>
            <person name="Olsen G.J."/>
            <person name="Fraser C.M."/>
            <person name="Smith H.O."/>
            <person name="Woese C.R."/>
            <person name="Venter J.C."/>
        </authorList>
    </citation>
    <scope>NUCLEOTIDE SEQUENCE [LARGE SCALE GENOMIC DNA]</scope>
    <source>
        <strain>ATCC 49558 / DSM 4304 / JCM 9628 / NBRC 100126 / VC-16</strain>
    </source>
</reference>
<organism>
    <name type="scientific">Archaeoglobus fulgidus (strain ATCC 49558 / DSM 4304 / JCM 9628 / NBRC 100126 / VC-16)</name>
    <dbReference type="NCBI Taxonomy" id="224325"/>
    <lineage>
        <taxon>Archaea</taxon>
        <taxon>Methanobacteriati</taxon>
        <taxon>Methanobacteriota</taxon>
        <taxon>Archaeoglobi</taxon>
        <taxon>Archaeoglobales</taxon>
        <taxon>Archaeoglobaceae</taxon>
        <taxon>Archaeoglobus</taxon>
    </lineage>
</organism>
<feature type="chain" id="PRO_0000131644" description="Small ribosomal subunit protein uS5">
    <location>
        <begin position="1"/>
        <end position="198"/>
    </location>
</feature>
<feature type="domain" description="S5 DRBM" evidence="1">
    <location>
        <begin position="46"/>
        <end position="109"/>
    </location>
</feature>
<keyword id="KW-1185">Reference proteome</keyword>
<keyword id="KW-0687">Ribonucleoprotein</keyword>
<keyword id="KW-0689">Ribosomal protein</keyword>
<keyword id="KW-0694">RNA-binding</keyword>
<keyword id="KW-0699">rRNA-binding</keyword>
<name>RS5_ARCFU</name>